<sequence length="852" mass="94310">MSSVSPIQIPSRLPLLLTHEGVLLPGSTMRTSVDSARNLQLVRSRLLKGTSLQSTILGVIPNTPDPASDAQDLPPLHRIGTAALAVQVVGSNWPKPHYTLLITGLCRFQITQVVREKPYPVAEVEQLDRLEEFPNTCKTREELGELSEQFYKYAVQLVEMLDMSVPAVAKLRRLLDSLPREALPDILTSIIRTSNKEKLQILDAVSLEERFKMTIPLLVRQIEGLKLLQKTRKHKQDDDKRVIAIRPMRRITHVPGALADEDEDEDNDDIVMLEKKIRTSSMPEQAHKVCVKEIKRLKKMPQSMPEYALTRNYLELMVELPWNKSTTDRLDIRAARVLLDNDHYAMEKLKKRVLEYLAVRQLKNNLKGPILCFVGPPGVGKTSVGRSVAKTLGREFHRIALGGVCDQSDIRGHRRTYVGSMPGRIINGLKTVGVNNPVFLLDEVDKLGKSLQGDPAAALLEVLDPEQNHNFTDHYLNVAFDLSQVLFIATANTTASIPPALLDRMEIIQVPGYTQEEKIEIAHRHLIPKQLEQHGLTPQQIQIPQVTTLDIITRYTREAGVRSLDRKLGAICRAVAVKVAEGQHREAKLDRPDVAEGEGCKEHLLEDGKSDPVSDTTDLALPPEMPILIDFHALKDILGPPMYEMEVSERLSQPGVAIGLAWTPLGGEIMFVEASRMDGEGQLTLTGQLGNVMKESAHLAISWLRSNAKKYHLTNASGSFDLLENTDIHLHFPAGAVTKDGPSAGVTIATCLASLFSGRLVRSDVAMTGEITLRGLVLPVGGIKDKALAAHRAGLKRVIIPQRNEKDLEEIPANVRQDLSFITASCLDEVLNAAFDGGFTVKARPGLLNSKL</sequence>
<evidence type="ECO:0000250" key="1">
    <source>
        <dbReference type="UniProtKB" id="Q86WA8"/>
    </source>
</evidence>
<evidence type="ECO:0000255" key="2">
    <source>
        <dbReference type="HAMAP-Rule" id="MF_03121"/>
    </source>
</evidence>
<evidence type="ECO:0000255" key="3">
    <source>
        <dbReference type="PROSITE-ProRule" id="PRU01122"/>
    </source>
</evidence>
<evidence type="ECO:0000255" key="4">
    <source>
        <dbReference type="PROSITE-ProRule" id="PRU01123"/>
    </source>
</evidence>
<feature type="initiator methionine" description="Removed" evidence="1">
    <location>
        <position position="1"/>
    </location>
</feature>
<feature type="chain" id="PRO_0000287639" description="Lon protease homolog 2, peroxisomal">
    <location>
        <begin position="2"/>
        <end position="852"/>
    </location>
</feature>
<feature type="domain" description="Lon N-terminal" evidence="4">
    <location>
        <begin position="13"/>
        <end position="222"/>
    </location>
</feature>
<feature type="domain" description="Lon proteolytic" evidence="3">
    <location>
        <begin position="651"/>
        <end position="837"/>
    </location>
</feature>
<feature type="short sequence motif" description="Microbody targeting signal" evidence="2">
    <location>
        <begin position="850"/>
        <end position="852"/>
    </location>
</feature>
<feature type="active site" evidence="2">
    <location>
        <position position="743"/>
    </location>
</feature>
<feature type="active site" evidence="2">
    <location>
        <position position="786"/>
    </location>
</feature>
<feature type="binding site" evidence="2">
    <location>
        <begin position="375"/>
        <end position="382"/>
    </location>
    <ligand>
        <name>ATP</name>
        <dbReference type="ChEBI" id="CHEBI:30616"/>
    </ligand>
</feature>
<feature type="modified residue" description="N-acetylserine" evidence="1">
    <location>
        <position position="2"/>
    </location>
</feature>
<comment type="function">
    <text evidence="2">ATP-dependent serine protease that mediates the selective degradation of misfolded and unassembled polypeptides in the peroxisomal matrix. Necessary for type 2 peroxisome targeting signal (PTS2)-containing protein processing and facilitates peroxisome matrix protein import. May indirectly regulate peroxisomal fatty acid beta-oxidation through degradation of the self-processed forms of TYSND1.</text>
</comment>
<comment type="catalytic activity">
    <reaction evidence="2">
        <text>Hydrolysis of proteins in presence of ATP.</text>
        <dbReference type="EC" id="3.4.21.53"/>
    </reaction>
</comment>
<comment type="subunit">
    <text evidence="1 2">Interacts with PEX5. Interacts with TYSND1. May interact with enzymes involved in beta-oxidation of fatty acids, including ACOX1/AOX (By similarity).</text>
</comment>
<comment type="subcellular location">
    <subcellularLocation>
        <location evidence="1 2">Peroxisome matrix</location>
    </subcellularLocation>
</comment>
<comment type="similarity">
    <text evidence="2">Belongs to the peptidase S16 family.</text>
</comment>
<organism>
    <name type="scientific">Bos taurus</name>
    <name type="common">Bovine</name>
    <dbReference type="NCBI Taxonomy" id="9913"/>
    <lineage>
        <taxon>Eukaryota</taxon>
        <taxon>Metazoa</taxon>
        <taxon>Chordata</taxon>
        <taxon>Craniata</taxon>
        <taxon>Vertebrata</taxon>
        <taxon>Euteleostomi</taxon>
        <taxon>Mammalia</taxon>
        <taxon>Eutheria</taxon>
        <taxon>Laurasiatheria</taxon>
        <taxon>Artiodactyla</taxon>
        <taxon>Ruminantia</taxon>
        <taxon>Pecora</taxon>
        <taxon>Bovidae</taxon>
        <taxon>Bovinae</taxon>
        <taxon>Bos</taxon>
    </lineage>
</organism>
<proteinExistence type="evidence at transcript level"/>
<accession>Q3SX23</accession>
<name>LONP2_BOVIN</name>
<protein>
    <recommendedName>
        <fullName evidence="2">Lon protease homolog 2, peroxisomal</fullName>
        <ecNumber evidence="2">3.4.21.53</ecNumber>
    </recommendedName>
    <alternativeName>
        <fullName evidence="2">Lon protease-like protein 2</fullName>
        <shortName evidence="2">Lon protease 2</shortName>
    </alternativeName>
    <alternativeName>
        <fullName evidence="2">Peroxisomal Lon protease</fullName>
    </alternativeName>
</protein>
<dbReference type="EC" id="3.4.21.53" evidence="2"/>
<dbReference type="EMBL" id="BC104547">
    <property type="protein sequence ID" value="AAI04548.1"/>
    <property type="molecule type" value="mRNA"/>
</dbReference>
<dbReference type="RefSeq" id="NP_001029895.1">
    <property type="nucleotide sequence ID" value="NM_001034723.1"/>
</dbReference>
<dbReference type="SMR" id="Q3SX23"/>
<dbReference type="FunCoup" id="Q3SX23">
    <property type="interactions" value="1279"/>
</dbReference>
<dbReference type="STRING" id="9913.ENSBTAP00000014427"/>
<dbReference type="PaxDb" id="9913-ENSBTAP00000014427"/>
<dbReference type="Ensembl" id="ENSBTAT00000097218.1">
    <property type="protein sequence ID" value="ENSBTAP00000076223.1"/>
    <property type="gene ID" value="ENSBTAG00000010867.5"/>
</dbReference>
<dbReference type="GeneID" id="541085"/>
<dbReference type="KEGG" id="bta:541085"/>
<dbReference type="CTD" id="83752"/>
<dbReference type="VEuPathDB" id="HostDB:ENSBTAG00000010867"/>
<dbReference type="VGNC" id="VGNC:30948">
    <property type="gene designation" value="LONP2"/>
</dbReference>
<dbReference type="eggNOG" id="KOG2004">
    <property type="taxonomic scope" value="Eukaryota"/>
</dbReference>
<dbReference type="GeneTree" id="ENSGT00530000063553"/>
<dbReference type="HOGENOM" id="CLU_004109_4_2_1"/>
<dbReference type="InParanoid" id="Q3SX23"/>
<dbReference type="OMA" id="EYFLHQQ"/>
<dbReference type="OrthoDB" id="2411602at2759"/>
<dbReference type="TreeFam" id="TF317215"/>
<dbReference type="Reactome" id="R-BTA-9033241">
    <property type="pathway name" value="Peroxisomal protein import"/>
</dbReference>
<dbReference type="Proteomes" id="UP000009136">
    <property type="component" value="Chromosome 18"/>
</dbReference>
<dbReference type="Bgee" id="ENSBTAG00000010867">
    <property type="expression patterns" value="Expressed in liver and 107 other cell types or tissues"/>
</dbReference>
<dbReference type="GO" id="GO:0005634">
    <property type="term" value="C:nucleus"/>
    <property type="evidence" value="ECO:0007669"/>
    <property type="project" value="Ensembl"/>
</dbReference>
<dbReference type="GO" id="GO:0005782">
    <property type="term" value="C:peroxisomal matrix"/>
    <property type="evidence" value="ECO:0000318"/>
    <property type="project" value="GO_Central"/>
</dbReference>
<dbReference type="GO" id="GO:0005524">
    <property type="term" value="F:ATP binding"/>
    <property type="evidence" value="ECO:0007669"/>
    <property type="project" value="UniProtKB-UniRule"/>
</dbReference>
<dbReference type="GO" id="GO:0016887">
    <property type="term" value="F:ATP hydrolysis activity"/>
    <property type="evidence" value="ECO:0007669"/>
    <property type="project" value="UniProtKB-UniRule"/>
</dbReference>
<dbReference type="GO" id="GO:0004176">
    <property type="term" value="F:ATP-dependent peptidase activity"/>
    <property type="evidence" value="ECO:0007669"/>
    <property type="project" value="UniProtKB-UniRule"/>
</dbReference>
<dbReference type="GO" id="GO:0002020">
    <property type="term" value="F:protease binding"/>
    <property type="evidence" value="ECO:0007669"/>
    <property type="project" value="Ensembl"/>
</dbReference>
<dbReference type="GO" id="GO:0004252">
    <property type="term" value="F:serine-type endopeptidase activity"/>
    <property type="evidence" value="ECO:0007669"/>
    <property type="project" value="UniProtKB-UniRule"/>
</dbReference>
<dbReference type="GO" id="GO:0016558">
    <property type="term" value="P:protein import into peroxisome matrix"/>
    <property type="evidence" value="ECO:0007669"/>
    <property type="project" value="UniProtKB-UniRule"/>
</dbReference>
<dbReference type="GO" id="GO:0016485">
    <property type="term" value="P:protein processing"/>
    <property type="evidence" value="ECO:0000318"/>
    <property type="project" value="GO_Central"/>
</dbReference>
<dbReference type="GO" id="GO:0006515">
    <property type="term" value="P:protein quality control for misfolded or incompletely synthesized proteins"/>
    <property type="evidence" value="ECO:0007669"/>
    <property type="project" value="UniProtKB-UniRule"/>
</dbReference>
<dbReference type="GO" id="GO:0006625">
    <property type="term" value="P:protein targeting to peroxisome"/>
    <property type="evidence" value="ECO:0000318"/>
    <property type="project" value="GO_Central"/>
</dbReference>
<dbReference type="GO" id="GO:0031998">
    <property type="term" value="P:regulation of fatty acid beta-oxidation"/>
    <property type="evidence" value="ECO:0007669"/>
    <property type="project" value="Ensembl"/>
</dbReference>
<dbReference type="CDD" id="cd19500">
    <property type="entry name" value="RecA-like_Lon"/>
    <property type="match status" value="1"/>
</dbReference>
<dbReference type="FunFam" id="1.10.8.60:FF:000046">
    <property type="entry name" value="Lon protease homolog 2, peroxisomal"/>
    <property type="match status" value="1"/>
</dbReference>
<dbReference type="FunFam" id="1.20.5.5270:FF:000003">
    <property type="entry name" value="Lon protease homolog 2, peroxisomal"/>
    <property type="match status" value="1"/>
</dbReference>
<dbReference type="FunFam" id="2.30.130.40:FF:000003">
    <property type="entry name" value="Lon protease homolog 2, peroxisomal"/>
    <property type="match status" value="1"/>
</dbReference>
<dbReference type="FunFam" id="3.30.230.10:FF:000019">
    <property type="entry name" value="Lon protease homolog 2, peroxisomal"/>
    <property type="match status" value="1"/>
</dbReference>
<dbReference type="FunFam" id="3.40.50.300:FF:000382">
    <property type="entry name" value="Lon protease homolog 2, peroxisomal"/>
    <property type="match status" value="1"/>
</dbReference>
<dbReference type="Gene3D" id="1.10.8.60">
    <property type="match status" value="1"/>
</dbReference>
<dbReference type="Gene3D" id="1.20.5.5270">
    <property type="match status" value="1"/>
</dbReference>
<dbReference type="Gene3D" id="3.30.230.10">
    <property type="match status" value="1"/>
</dbReference>
<dbReference type="Gene3D" id="2.30.130.40">
    <property type="entry name" value="LON domain-like"/>
    <property type="match status" value="1"/>
</dbReference>
<dbReference type="Gene3D" id="3.40.50.300">
    <property type="entry name" value="P-loop containing nucleotide triphosphate hydrolases"/>
    <property type="match status" value="1"/>
</dbReference>
<dbReference type="HAMAP" id="MF_03121">
    <property type="entry name" value="lonp2_euk"/>
    <property type="match status" value="1"/>
</dbReference>
<dbReference type="InterPro" id="IPR003593">
    <property type="entry name" value="AAA+_ATPase"/>
</dbReference>
<dbReference type="InterPro" id="IPR003959">
    <property type="entry name" value="ATPase_AAA_core"/>
</dbReference>
<dbReference type="InterPro" id="IPR004815">
    <property type="entry name" value="Lon_bac/euk-typ"/>
</dbReference>
<dbReference type="InterPro" id="IPR054594">
    <property type="entry name" value="Lon_lid"/>
</dbReference>
<dbReference type="InterPro" id="IPR008269">
    <property type="entry name" value="Lon_proteolytic"/>
</dbReference>
<dbReference type="InterPro" id="IPR027065">
    <property type="entry name" value="Lon_Prtase"/>
</dbReference>
<dbReference type="InterPro" id="IPR003111">
    <property type="entry name" value="Lon_prtase_N"/>
</dbReference>
<dbReference type="InterPro" id="IPR046336">
    <property type="entry name" value="Lon_prtase_N_sf"/>
</dbReference>
<dbReference type="InterPro" id="IPR027501">
    <property type="entry name" value="Lonp2_euk"/>
</dbReference>
<dbReference type="InterPro" id="IPR027417">
    <property type="entry name" value="P-loop_NTPase"/>
</dbReference>
<dbReference type="InterPro" id="IPR008268">
    <property type="entry name" value="Peptidase_S16_AS"/>
</dbReference>
<dbReference type="InterPro" id="IPR015947">
    <property type="entry name" value="PUA-like_sf"/>
</dbReference>
<dbReference type="InterPro" id="IPR020568">
    <property type="entry name" value="Ribosomal_Su5_D2-typ_SF"/>
</dbReference>
<dbReference type="InterPro" id="IPR014721">
    <property type="entry name" value="Ribsml_uS5_D2-typ_fold_subgr"/>
</dbReference>
<dbReference type="NCBIfam" id="TIGR00763">
    <property type="entry name" value="lon"/>
    <property type="match status" value="1"/>
</dbReference>
<dbReference type="PANTHER" id="PTHR10046">
    <property type="entry name" value="ATP DEPENDENT LON PROTEASE FAMILY MEMBER"/>
    <property type="match status" value="1"/>
</dbReference>
<dbReference type="Pfam" id="PF00004">
    <property type="entry name" value="AAA"/>
    <property type="match status" value="1"/>
</dbReference>
<dbReference type="Pfam" id="PF05362">
    <property type="entry name" value="Lon_C"/>
    <property type="match status" value="1"/>
</dbReference>
<dbReference type="Pfam" id="PF22667">
    <property type="entry name" value="Lon_lid"/>
    <property type="match status" value="1"/>
</dbReference>
<dbReference type="Pfam" id="PF02190">
    <property type="entry name" value="LON_substr_bdg"/>
    <property type="match status" value="1"/>
</dbReference>
<dbReference type="PIRSF" id="PIRSF001174">
    <property type="entry name" value="Lon_proteas"/>
    <property type="match status" value="1"/>
</dbReference>
<dbReference type="PRINTS" id="PR00830">
    <property type="entry name" value="ENDOLAPTASE"/>
</dbReference>
<dbReference type="SMART" id="SM00382">
    <property type="entry name" value="AAA"/>
    <property type="match status" value="1"/>
</dbReference>
<dbReference type="SMART" id="SM00464">
    <property type="entry name" value="LON"/>
    <property type="match status" value="1"/>
</dbReference>
<dbReference type="SUPFAM" id="SSF52540">
    <property type="entry name" value="P-loop containing nucleoside triphosphate hydrolases"/>
    <property type="match status" value="1"/>
</dbReference>
<dbReference type="SUPFAM" id="SSF88697">
    <property type="entry name" value="PUA domain-like"/>
    <property type="match status" value="1"/>
</dbReference>
<dbReference type="SUPFAM" id="SSF54211">
    <property type="entry name" value="Ribosomal protein S5 domain 2-like"/>
    <property type="match status" value="1"/>
</dbReference>
<dbReference type="PROSITE" id="PS51787">
    <property type="entry name" value="LON_N"/>
    <property type="match status" value="1"/>
</dbReference>
<dbReference type="PROSITE" id="PS51786">
    <property type="entry name" value="LON_PROTEOLYTIC"/>
    <property type="match status" value="1"/>
</dbReference>
<dbReference type="PROSITE" id="PS01046">
    <property type="entry name" value="LON_SER"/>
    <property type="match status" value="1"/>
</dbReference>
<gene>
    <name evidence="2" type="primary">LONP2</name>
</gene>
<reference key="1">
    <citation type="submission" date="2005-09" db="EMBL/GenBank/DDBJ databases">
        <authorList>
            <consortium name="NIH - Mammalian Gene Collection (MGC) project"/>
        </authorList>
    </citation>
    <scope>NUCLEOTIDE SEQUENCE [LARGE SCALE MRNA]</scope>
    <source>
        <strain>Hereford</strain>
        <tissue>Uterus</tissue>
    </source>
</reference>
<keyword id="KW-0007">Acetylation</keyword>
<keyword id="KW-0067">ATP-binding</keyword>
<keyword id="KW-0378">Hydrolase</keyword>
<keyword id="KW-0547">Nucleotide-binding</keyword>
<keyword id="KW-0576">Peroxisome</keyword>
<keyword id="KW-0645">Protease</keyword>
<keyword id="KW-1185">Reference proteome</keyword>
<keyword id="KW-0720">Serine protease</keyword>